<accession>Q8CFD0</accession>
<keyword id="KW-0029">Amino-acid transport</keyword>
<keyword id="KW-0472">Membrane</keyword>
<keyword id="KW-0496">Mitochondrion</keyword>
<keyword id="KW-0999">Mitochondrion inner membrane</keyword>
<keyword id="KW-1185">Reference proteome</keyword>
<keyword id="KW-0812">Transmembrane</keyword>
<keyword id="KW-1133">Transmembrane helix</keyword>
<keyword id="KW-0813">Transport</keyword>
<protein>
    <recommendedName>
        <fullName evidence="8">Sideroflexin-5</fullName>
    </recommendedName>
    <alternativeName>
        <fullName evidence="7">Tricarboxylate carrier BBG-TCC</fullName>
    </alternativeName>
</protein>
<sequence>MADTATTASAASAAASASNASSDAPPFQLGKPRFQQTSFYGRFRHFLDIIDPRTLFVTEKRLREAVQLLEDYKHGTLRPGVTNEQLWSAQKIKQAILHPDTNEKIFMPFRMSGYIPFGTPIVVGLLLPNQTLASTVFWQWLNQSHNACVNYANRNATKPSPASKFIQGYLGAVISAVSIAVGLNVLVQKANKFTPATRLLVQRFVPFPAVASANICNVVLMRYGELEEGIDVLDADGNLVGSSKIAARHALLETALTRVVLPMPILVLPPIVMSMLEKTALLQARPRLLLPVHSLVCLAAFGLALPLAISLFPQMSEIETSQLEPEIARATSSRTVVYNKGL</sequence>
<name>SFXN5_RAT</name>
<organism>
    <name type="scientific">Rattus norvegicus</name>
    <name type="common">Rat</name>
    <dbReference type="NCBI Taxonomy" id="10116"/>
    <lineage>
        <taxon>Eukaryota</taxon>
        <taxon>Metazoa</taxon>
        <taxon>Chordata</taxon>
        <taxon>Craniata</taxon>
        <taxon>Vertebrata</taxon>
        <taxon>Euteleostomi</taxon>
        <taxon>Mammalia</taxon>
        <taxon>Eutheria</taxon>
        <taxon>Euarchontoglires</taxon>
        <taxon>Glires</taxon>
        <taxon>Rodentia</taxon>
        <taxon>Myomorpha</taxon>
        <taxon>Muroidea</taxon>
        <taxon>Muridae</taxon>
        <taxon>Murinae</taxon>
        <taxon>Rattus</taxon>
    </lineage>
</organism>
<evidence type="ECO:0000250" key="1">
    <source>
        <dbReference type="UniProtKB" id="Q8TD22"/>
    </source>
</evidence>
<evidence type="ECO:0000250" key="2">
    <source>
        <dbReference type="UniProtKB" id="Q925N0"/>
    </source>
</evidence>
<evidence type="ECO:0000250" key="3">
    <source>
        <dbReference type="UniProtKB" id="Q9H9B4"/>
    </source>
</evidence>
<evidence type="ECO:0000255" key="4"/>
<evidence type="ECO:0000256" key="5">
    <source>
        <dbReference type="SAM" id="MobiDB-lite"/>
    </source>
</evidence>
<evidence type="ECO:0000269" key="6">
    <source>
    </source>
</evidence>
<evidence type="ECO:0000303" key="7">
    <source>
    </source>
</evidence>
<evidence type="ECO:0000305" key="8"/>
<evidence type="ECO:0000312" key="9">
    <source>
        <dbReference type="RGD" id="628706"/>
    </source>
</evidence>
<comment type="function">
    <text evidence="1 2 3 6">Mitochondrial amino-acid transporter (By similarity). Transports citrate (PubMed:12150972). Does not act as a serine transporter: not able to mediate transport of serine into mitochondria (By similarity) (PubMed:12150972). In brown adipose tissue, plays a role in the regulation of UCP1-dependent thermogenesis probably by supporting mitochondrial glycerol-3-phosphate utilization (By similarity).</text>
</comment>
<comment type="catalytic activity">
    <reaction evidence="6">
        <text>citrate(in) = citrate(out)</text>
        <dbReference type="Rhea" id="RHEA:33183"/>
        <dbReference type="ChEBI" id="CHEBI:16947"/>
    </reaction>
</comment>
<comment type="biophysicochemical properties">
    <kinetics>
        <KM evidence="6">2.5 mM for citrate</KM>
        <Vmax evidence="6">183.0 nmol/min/mg enzyme toward citrate</Vmax>
    </kinetics>
</comment>
<comment type="subcellular location">
    <subcellularLocation>
        <location evidence="6">Mitochondrion inner membrane</location>
        <topology evidence="4">Multi-pass membrane protein</topology>
    </subcellularLocation>
</comment>
<comment type="tissue specificity">
    <text evidence="6">Specifically expressed in the brain.</text>
</comment>
<comment type="similarity">
    <text evidence="8">Belongs to the sideroflexin family.</text>
</comment>
<gene>
    <name evidence="9" type="primary">Sfxn5</name>
</gene>
<feature type="chain" id="PRO_0000177045" description="Sideroflexin-5">
    <location>
        <begin position="1"/>
        <end position="342"/>
    </location>
</feature>
<feature type="transmembrane region" description="Helical" evidence="4">
    <location>
        <begin position="105"/>
        <end position="125"/>
    </location>
</feature>
<feature type="transmembrane region" description="Helical" evidence="4">
    <location>
        <begin position="165"/>
        <end position="185"/>
    </location>
</feature>
<feature type="transmembrane region" description="Helical" evidence="4">
    <location>
        <begin position="256"/>
        <end position="276"/>
    </location>
</feature>
<feature type="transmembrane region" description="Helical" evidence="4">
    <location>
        <begin position="289"/>
        <end position="309"/>
    </location>
</feature>
<feature type="region of interest" description="Disordered" evidence="5">
    <location>
        <begin position="1"/>
        <end position="29"/>
    </location>
</feature>
<feature type="compositionally biased region" description="Low complexity" evidence="5">
    <location>
        <begin position="1"/>
        <end position="24"/>
    </location>
</feature>
<dbReference type="EMBL" id="AB056724">
    <property type="protein sequence ID" value="BAC15564.1"/>
    <property type="molecule type" value="mRNA"/>
</dbReference>
<dbReference type="RefSeq" id="NP_695210.1">
    <property type="nucleotide sequence ID" value="NM_153298.1"/>
</dbReference>
<dbReference type="FunCoup" id="Q8CFD0">
    <property type="interactions" value="408"/>
</dbReference>
<dbReference type="STRING" id="10116.ENSRNOP00000054347"/>
<dbReference type="iPTMnet" id="Q8CFD0"/>
<dbReference type="PhosphoSitePlus" id="Q8CFD0"/>
<dbReference type="PaxDb" id="10116-ENSRNOP00000054347"/>
<dbReference type="Ensembl" id="ENSRNOT00000057537.5">
    <property type="protein sequence ID" value="ENSRNOP00000054347.3"/>
    <property type="gene ID" value="ENSRNOG00000037871.5"/>
</dbReference>
<dbReference type="GeneID" id="261737"/>
<dbReference type="KEGG" id="rno:261737"/>
<dbReference type="UCSC" id="RGD:628706">
    <property type="organism name" value="rat"/>
</dbReference>
<dbReference type="AGR" id="RGD:628706"/>
<dbReference type="CTD" id="94097"/>
<dbReference type="RGD" id="628706">
    <property type="gene designation" value="Sfxn5"/>
</dbReference>
<dbReference type="eggNOG" id="KOG3767">
    <property type="taxonomic scope" value="Eukaryota"/>
</dbReference>
<dbReference type="GeneTree" id="ENSGT01030000234641"/>
<dbReference type="HOGENOM" id="CLU_039425_2_1_1"/>
<dbReference type="InParanoid" id="Q8CFD0"/>
<dbReference type="PhylomeDB" id="Q8CFD0"/>
<dbReference type="PRO" id="PR:Q8CFD0"/>
<dbReference type="Proteomes" id="UP000002494">
    <property type="component" value="Chromosome 4"/>
</dbReference>
<dbReference type="Bgee" id="ENSRNOG00000037871">
    <property type="expression patterns" value="Expressed in frontal cortex and 18 other cell types or tissues"/>
</dbReference>
<dbReference type="GO" id="GO:0005743">
    <property type="term" value="C:mitochondrial inner membrane"/>
    <property type="evidence" value="ECO:0000266"/>
    <property type="project" value="RGD"/>
</dbReference>
<dbReference type="GO" id="GO:0005739">
    <property type="term" value="C:mitochondrion"/>
    <property type="evidence" value="ECO:0000266"/>
    <property type="project" value="RGD"/>
</dbReference>
<dbReference type="GO" id="GO:0015137">
    <property type="term" value="F:citrate transmembrane transporter activity"/>
    <property type="evidence" value="ECO:0000314"/>
    <property type="project" value="RGD"/>
</dbReference>
<dbReference type="GO" id="GO:0015075">
    <property type="term" value="F:monoatomic ion transmembrane transporter activity"/>
    <property type="evidence" value="ECO:0007669"/>
    <property type="project" value="InterPro"/>
</dbReference>
<dbReference type="GO" id="GO:0006865">
    <property type="term" value="P:amino acid transport"/>
    <property type="evidence" value="ECO:0007669"/>
    <property type="project" value="UniProtKB-KW"/>
</dbReference>
<dbReference type="GO" id="GO:0015746">
    <property type="term" value="P:citrate transport"/>
    <property type="evidence" value="ECO:0000314"/>
    <property type="project" value="RGD"/>
</dbReference>
<dbReference type="GO" id="GO:1990542">
    <property type="term" value="P:mitochondrial transmembrane transport"/>
    <property type="evidence" value="ECO:0000318"/>
    <property type="project" value="GO_Central"/>
</dbReference>
<dbReference type="GO" id="GO:0120162">
    <property type="term" value="P:positive regulation of cold-induced thermogenesis"/>
    <property type="evidence" value="ECO:0000266"/>
    <property type="project" value="RGD"/>
</dbReference>
<dbReference type="InterPro" id="IPR004686">
    <property type="entry name" value="Mtc"/>
</dbReference>
<dbReference type="NCBIfam" id="TIGR00798">
    <property type="entry name" value="mtc"/>
    <property type="match status" value="1"/>
</dbReference>
<dbReference type="PANTHER" id="PTHR11153">
    <property type="entry name" value="SIDEROFLEXIN"/>
    <property type="match status" value="1"/>
</dbReference>
<dbReference type="PANTHER" id="PTHR11153:SF17">
    <property type="entry name" value="SIDEROFLEXIN-5"/>
    <property type="match status" value="1"/>
</dbReference>
<dbReference type="Pfam" id="PF03820">
    <property type="entry name" value="SFXNs"/>
    <property type="match status" value="1"/>
</dbReference>
<reference key="1">
    <citation type="journal article" date="2002" name="Biochem. Biophys. Res. Commun.">
        <title>Identification and characterization of a novel mitochondrial tricarboxylate carrier.</title>
        <authorList>
            <person name="Miyake S."/>
            <person name="Yamashita T."/>
            <person name="Taniguchi M."/>
            <person name="Tamatani M."/>
            <person name="Sato K."/>
            <person name="Tohyama M."/>
        </authorList>
    </citation>
    <scope>NUCLEOTIDE SEQUENCE [MRNA]</scope>
    <scope>FUNCTION</scope>
    <scope>SUBCELLULAR LOCATION</scope>
    <scope>TISSUE SPECIFICITY</scope>
    <scope>CATALYTIC ACTIVITY</scope>
    <scope>BIOPHYSICOCHEMICAL PROPERTIES</scope>
    <source>
        <tissue>Brain</tissue>
    </source>
</reference>
<proteinExistence type="evidence at protein level"/>